<gene>
    <name evidence="1" type="primary">rplF</name>
    <name type="ordered locus">Sden_0185</name>
</gene>
<keyword id="KW-1185">Reference proteome</keyword>
<keyword id="KW-0687">Ribonucleoprotein</keyword>
<keyword id="KW-0689">Ribosomal protein</keyword>
<keyword id="KW-0694">RNA-binding</keyword>
<keyword id="KW-0699">rRNA-binding</keyword>
<protein>
    <recommendedName>
        <fullName evidence="1">Large ribosomal subunit protein uL6</fullName>
    </recommendedName>
    <alternativeName>
        <fullName evidence="2">50S ribosomal protein L6</fullName>
    </alternativeName>
</protein>
<sequence>MSRVAKAPVTIPAGVEVTLNEQTLTVKGSKGSLTRVINSAVNVVIEDAQVKFLPVEGVDGAWAQAGTARALVNNMVVGVSQGFVKKLKLVGVGYRAKIAGSDLDLTLGFSHPLVHKLPAGVTAECPSQTEIVLSGVDKQLIGQVAAEIRGYRPPEPYKGKGVRYDDEVVRRKEAKKK</sequence>
<comment type="function">
    <text evidence="1">This protein binds to the 23S rRNA, and is important in its secondary structure. It is located near the subunit interface in the base of the L7/L12 stalk, and near the tRNA binding site of the peptidyltransferase center.</text>
</comment>
<comment type="subunit">
    <text evidence="1">Part of the 50S ribosomal subunit.</text>
</comment>
<comment type="similarity">
    <text evidence="1">Belongs to the universal ribosomal protein uL6 family.</text>
</comment>
<reference key="1">
    <citation type="submission" date="2006-03" db="EMBL/GenBank/DDBJ databases">
        <title>Complete sequence of Shewanella denitrificans OS217.</title>
        <authorList>
            <consortium name="US DOE Joint Genome Institute"/>
            <person name="Copeland A."/>
            <person name="Lucas S."/>
            <person name="Lapidus A."/>
            <person name="Barry K."/>
            <person name="Detter J.C."/>
            <person name="Glavina del Rio T."/>
            <person name="Hammon N."/>
            <person name="Israni S."/>
            <person name="Dalin E."/>
            <person name="Tice H."/>
            <person name="Pitluck S."/>
            <person name="Brettin T."/>
            <person name="Bruce D."/>
            <person name="Han C."/>
            <person name="Tapia R."/>
            <person name="Gilna P."/>
            <person name="Kiss H."/>
            <person name="Schmutz J."/>
            <person name="Larimer F."/>
            <person name="Land M."/>
            <person name="Hauser L."/>
            <person name="Kyrpides N."/>
            <person name="Lykidis A."/>
            <person name="Richardson P."/>
        </authorList>
    </citation>
    <scope>NUCLEOTIDE SEQUENCE [LARGE SCALE GENOMIC DNA]</scope>
    <source>
        <strain>OS217 / ATCC BAA-1090 / DSM 15013</strain>
    </source>
</reference>
<name>RL6_SHEDO</name>
<evidence type="ECO:0000255" key="1">
    <source>
        <dbReference type="HAMAP-Rule" id="MF_01365"/>
    </source>
</evidence>
<evidence type="ECO:0000305" key="2"/>
<dbReference type="EMBL" id="CP000302">
    <property type="protein sequence ID" value="ABE53482.1"/>
    <property type="molecule type" value="Genomic_DNA"/>
</dbReference>
<dbReference type="RefSeq" id="WP_011494649.1">
    <property type="nucleotide sequence ID" value="NC_007954.1"/>
</dbReference>
<dbReference type="SMR" id="Q12SU4"/>
<dbReference type="STRING" id="318161.Sden_0185"/>
<dbReference type="KEGG" id="sdn:Sden_0185"/>
<dbReference type="eggNOG" id="COG0097">
    <property type="taxonomic scope" value="Bacteria"/>
</dbReference>
<dbReference type="HOGENOM" id="CLU_065464_1_2_6"/>
<dbReference type="OrthoDB" id="9805007at2"/>
<dbReference type="Proteomes" id="UP000001982">
    <property type="component" value="Chromosome"/>
</dbReference>
<dbReference type="GO" id="GO:0022625">
    <property type="term" value="C:cytosolic large ribosomal subunit"/>
    <property type="evidence" value="ECO:0007669"/>
    <property type="project" value="TreeGrafter"/>
</dbReference>
<dbReference type="GO" id="GO:0019843">
    <property type="term" value="F:rRNA binding"/>
    <property type="evidence" value="ECO:0007669"/>
    <property type="project" value="UniProtKB-UniRule"/>
</dbReference>
<dbReference type="GO" id="GO:0003735">
    <property type="term" value="F:structural constituent of ribosome"/>
    <property type="evidence" value="ECO:0007669"/>
    <property type="project" value="InterPro"/>
</dbReference>
<dbReference type="GO" id="GO:0002181">
    <property type="term" value="P:cytoplasmic translation"/>
    <property type="evidence" value="ECO:0007669"/>
    <property type="project" value="TreeGrafter"/>
</dbReference>
<dbReference type="FunFam" id="3.90.930.12:FF:000001">
    <property type="entry name" value="50S ribosomal protein L6"/>
    <property type="match status" value="1"/>
</dbReference>
<dbReference type="FunFam" id="3.90.930.12:FF:000002">
    <property type="entry name" value="50S ribosomal protein L6"/>
    <property type="match status" value="1"/>
</dbReference>
<dbReference type="Gene3D" id="3.90.930.12">
    <property type="entry name" value="Ribosomal protein L6, alpha-beta domain"/>
    <property type="match status" value="2"/>
</dbReference>
<dbReference type="HAMAP" id="MF_01365_B">
    <property type="entry name" value="Ribosomal_uL6_B"/>
    <property type="match status" value="1"/>
</dbReference>
<dbReference type="InterPro" id="IPR000702">
    <property type="entry name" value="Ribosomal_uL6-like"/>
</dbReference>
<dbReference type="InterPro" id="IPR036789">
    <property type="entry name" value="Ribosomal_uL6-like_a/b-dom_sf"/>
</dbReference>
<dbReference type="InterPro" id="IPR020040">
    <property type="entry name" value="Ribosomal_uL6_a/b-dom"/>
</dbReference>
<dbReference type="InterPro" id="IPR019906">
    <property type="entry name" value="Ribosomal_uL6_bac-type"/>
</dbReference>
<dbReference type="InterPro" id="IPR002358">
    <property type="entry name" value="Ribosomal_uL6_CS"/>
</dbReference>
<dbReference type="NCBIfam" id="TIGR03654">
    <property type="entry name" value="L6_bact"/>
    <property type="match status" value="1"/>
</dbReference>
<dbReference type="PANTHER" id="PTHR11655">
    <property type="entry name" value="60S/50S RIBOSOMAL PROTEIN L6/L9"/>
    <property type="match status" value="1"/>
</dbReference>
<dbReference type="PANTHER" id="PTHR11655:SF14">
    <property type="entry name" value="LARGE RIBOSOMAL SUBUNIT PROTEIN UL6M"/>
    <property type="match status" value="1"/>
</dbReference>
<dbReference type="Pfam" id="PF00347">
    <property type="entry name" value="Ribosomal_L6"/>
    <property type="match status" value="2"/>
</dbReference>
<dbReference type="PIRSF" id="PIRSF002162">
    <property type="entry name" value="Ribosomal_L6"/>
    <property type="match status" value="1"/>
</dbReference>
<dbReference type="PRINTS" id="PR00059">
    <property type="entry name" value="RIBOSOMALL6"/>
</dbReference>
<dbReference type="SUPFAM" id="SSF56053">
    <property type="entry name" value="Ribosomal protein L6"/>
    <property type="match status" value="2"/>
</dbReference>
<dbReference type="PROSITE" id="PS00525">
    <property type="entry name" value="RIBOSOMAL_L6_1"/>
    <property type="match status" value="1"/>
</dbReference>
<feature type="chain" id="PRO_0000265293" description="Large ribosomal subunit protein uL6">
    <location>
        <begin position="1"/>
        <end position="177"/>
    </location>
</feature>
<organism>
    <name type="scientific">Shewanella denitrificans (strain OS217 / ATCC BAA-1090 / DSM 15013)</name>
    <dbReference type="NCBI Taxonomy" id="318161"/>
    <lineage>
        <taxon>Bacteria</taxon>
        <taxon>Pseudomonadati</taxon>
        <taxon>Pseudomonadota</taxon>
        <taxon>Gammaproteobacteria</taxon>
        <taxon>Alteromonadales</taxon>
        <taxon>Shewanellaceae</taxon>
        <taxon>Shewanella</taxon>
    </lineage>
</organism>
<accession>Q12SU4</accession>
<proteinExistence type="inferred from homology"/>